<protein>
    <recommendedName>
        <fullName>UPF0758 protein Lcho_0695</fullName>
    </recommendedName>
</protein>
<comment type="similarity">
    <text evidence="2">Belongs to the UPF0758 family.</text>
</comment>
<name>Y695_LEPCP</name>
<keyword id="KW-0378">Hydrolase</keyword>
<keyword id="KW-0479">Metal-binding</keyword>
<keyword id="KW-0482">Metalloprotease</keyword>
<keyword id="KW-0645">Protease</keyword>
<keyword id="KW-1185">Reference proteome</keyword>
<keyword id="KW-0862">Zinc</keyword>
<gene>
    <name type="ordered locus">Lcho_0695</name>
</gene>
<proteinExistence type="inferred from homology"/>
<accession>B1Y0I9</accession>
<feature type="chain" id="PRO_1000089823" description="UPF0758 protein Lcho_0695">
    <location>
        <begin position="1"/>
        <end position="222"/>
    </location>
</feature>
<feature type="domain" description="MPN" evidence="1">
    <location>
        <begin position="100"/>
        <end position="222"/>
    </location>
</feature>
<feature type="short sequence motif" description="JAMM motif" evidence="1">
    <location>
        <begin position="171"/>
        <end position="184"/>
    </location>
</feature>
<feature type="binding site" evidence="1">
    <location>
        <position position="171"/>
    </location>
    <ligand>
        <name>Zn(2+)</name>
        <dbReference type="ChEBI" id="CHEBI:29105"/>
        <note>catalytic</note>
    </ligand>
</feature>
<feature type="binding site" evidence="1">
    <location>
        <position position="173"/>
    </location>
    <ligand>
        <name>Zn(2+)</name>
        <dbReference type="ChEBI" id="CHEBI:29105"/>
        <note>catalytic</note>
    </ligand>
</feature>
<feature type="binding site" evidence="1">
    <location>
        <position position="184"/>
    </location>
    <ligand>
        <name>Zn(2+)</name>
        <dbReference type="ChEBI" id="CHEBI:29105"/>
        <note>catalytic</note>
    </ligand>
</feature>
<reference key="1">
    <citation type="submission" date="2008-03" db="EMBL/GenBank/DDBJ databases">
        <title>Complete sequence of Leptothrix cholodnii SP-6.</title>
        <authorList>
            <consortium name="US DOE Joint Genome Institute"/>
            <person name="Copeland A."/>
            <person name="Lucas S."/>
            <person name="Lapidus A."/>
            <person name="Glavina del Rio T."/>
            <person name="Dalin E."/>
            <person name="Tice H."/>
            <person name="Bruce D."/>
            <person name="Goodwin L."/>
            <person name="Pitluck S."/>
            <person name="Chertkov O."/>
            <person name="Brettin T."/>
            <person name="Detter J.C."/>
            <person name="Han C."/>
            <person name="Kuske C.R."/>
            <person name="Schmutz J."/>
            <person name="Larimer F."/>
            <person name="Land M."/>
            <person name="Hauser L."/>
            <person name="Kyrpides N."/>
            <person name="Lykidis A."/>
            <person name="Emerson D."/>
            <person name="Richardson P."/>
        </authorList>
    </citation>
    <scope>NUCLEOTIDE SEQUENCE [LARGE SCALE GENOMIC DNA]</scope>
    <source>
        <strain>ATCC 51168 / LMG 8142 / SP-6</strain>
    </source>
</reference>
<dbReference type="EMBL" id="CP001013">
    <property type="protein sequence ID" value="ACB32970.1"/>
    <property type="molecule type" value="Genomic_DNA"/>
</dbReference>
<dbReference type="RefSeq" id="WP_012345732.1">
    <property type="nucleotide sequence ID" value="NC_010524.1"/>
</dbReference>
<dbReference type="SMR" id="B1Y0I9"/>
<dbReference type="STRING" id="395495.Lcho_0695"/>
<dbReference type="KEGG" id="lch:Lcho_0695"/>
<dbReference type="eggNOG" id="COG2003">
    <property type="taxonomic scope" value="Bacteria"/>
</dbReference>
<dbReference type="HOGENOM" id="CLU_073529_0_1_4"/>
<dbReference type="Proteomes" id="UP000001693">
    <property type="component" value="Chromosome"/>
</dbReference>
<dbReference type="GO" id="GO:0046872">
    <property type="term" value="F:metal ion binding"/>
    <property type="evidence" value="ECO:0007669"/>
    <property type="project" value="UniProtKB-KW"/>
</dbReference>
<dbReference type="GO" id="GO:0008237">
    <property type="term" value="F:metallopeptidase activity"/>
    <property type="evidence" value="ECO:0007669"/>
    <property type="project" value="UniProtKB-KW"/>
</dbReference>
<dbReference type="GO" id="GO:0006508">
    <property type="term" value="P:proteolysis"/>
    <property type="evidence" value="ECO:0007669"/>
    <property type="project" value="UniProtKB-KW"/>
</dbReference>
<dbReference type="CDD" id="cd08071">
    <property type="entry name" value="MPN_DUF2466"/>
    <property type="match status" value="1"/>
</dbReference>
<dbReference type="Gene3D" id="3.40.140.10">
    <property type="entry name" value="Cytidine Deaminase, domain 2"/>
    <property type="match status" value="1"/>
</dbReference>
<dbReference type="InterPro" id="IPR037518">
    <property type="entry name" value="MPN"/>
</dbReference>
<dbReference type="InterPro" id="IPR025657">
    <property type="entry name" value="RadC_JAB"/>
</dbReference>
<dbReference type="InterPro" id="IPR010994">
    <property type="entry name" value="RuvA_2-like"/>
</dbReference>
<dbReference type="InterPro" id="IPR001405">
    <property type="entry name" value="UPF0758"/>
</dbReference>
<dbReference type="InterPro" id="IPR020891">
    <property type="entry name" value="UPF0758_CS"/>
</dbReference>
<dbReference type="InterPro" id="IPR046778">
    <property type="entry name" value="UPF0758_N"/>
</dbReference>
<dbReference type="NCBIfam" id="NF000642">
    <property type="entry name" value="PRK00024.1"/>
    <property type="match status" value="1"/>
</dbReference>
<dbReference type="NCBIfam" id="TIGR00608">
    <property type="entry name" value="radc"/>
    <property type="match status" value="1"/>
</dbReference>
<dbReference type="PANTHER" id="PTHR30471">
    <property type="entry name" value="DNA REPAIR PROTEIN RADC"/>
    <property type="match status" value="1"/>
</dbReference>
<dbReference type="PANTHER" id="PTHR30471:SF3">
    <property type="entry name" value="UPF0758 PROTEIN YEES-RELATED"/>
    <property type="match status" value="1"/>
</dbReference>
<dbReference type="Pfam" id="PF04002">
    <property type="entry name" value="RadC"/>
    <property type="match status" value="1"/>
</dbReference>
<dbReference type="Pfam" id="PF20582">
    <property type="entry name" value="UPF0758_N"/>
    <property type="match status" value="1"/>
</dbReference>
<dbReference type="SUPFAM" id="SSF47781">
    <property type="entry name" value="RuvA domain 2-like"/>
    <property type="match status" value="1"/>
</dbReference>
<dbReference type="PROSITE" id="PS50249">
    <property type="entry name" value="MPN"/>
    <property type="match status" value="1"/>
</dbReference>
<dbReference type="PROSITE" id="PS01302">
    <property type="entry name" value="UPF0758"/>
    <property type="match status" value="1"/>
</dbReference>
<sequence length="222" mass="23942">MKDLPAAMRPREKLLALGPAALADAELLALLLRTGLKGTGVLQLAGQLLAQFGGIGGLLQADPAGLKTVKGLGPAKRSELQAVLELARRAIVSQLAQRPVFDSPQAVRDYLRLQLGRLDHEVFAVLFLDAQHRLIAYEPLFRGTLTQTSVYPREVLKRALALNAAALILAHNHPSGVAEPSRADEFLTQSLKTALALIDVRVLDHFVVGRESVVSFAERGLL</sequence>
<organism>
    <name type="scientific">Leptothrix cholodnii (strain ATCC 51168 / LMG 8142 / SP-6)</name>
    <name type="common">Leptothrix discophora (strain SP-6)</name>
    <dbReference type="NCBI Taxonomy" id="395495"/>
    <lineage>
        <taxon>Bacteria</taxon>
        <taxon>Pseudomonadati</taxon>
        <taxon>Pseudomonadota</taxon>
        <taxon>Betaproteobacteria</taxon>
        <taxon>Burkholderiales</taxon>
        <taxon>Sphaerotilaceae</taxon>
        <taxon>Leptothrix</taxon>
    </lineage>
</organism>
<evidence type="ECO:0000255" key="1">
    <source>
        <dbReference type="PROSITE-ProRule" id="PRU01182"/>
    </source>
</evidence>
<evidence type="ECO:0000305" key="2"/>